<accession>Q5FFT3</accession>
<keyword id="KW-0687">Ribonucleoprotein</keyword>
<keyword id="KW-0689">Ribosomal protein</keyword>
<proteinExistence type="inferred from homology"/>
<sequence length="60" mass="6866">MAVPKRKKSKSRRNMHRSHCKLKVPNIGIDKTTGEYKLSHHICLGGYYNGKQIVEVDSNI</sequence>
<reference key="1">
    <citation type="journal article" date="2006" name="J. Bacteriol.">
        <title>Comparative genomic analysis of three strains of Ehrlichia ruminantium reveals an active process of genome size plasticity.</title>
        <authorList>
            <person name="Frutos R."/>
            <person name="Viari A."/>
            <person name="Ferraz C."/>
            <person name="Morgat A."/>
            <person name="Eychenie S."/>
            <person name="Kandassamy Y."/>
            <person name="Chantal I."/>
            <person name="Bensaid A."/>
            <person name="Coissac E."/>
            <person name="Vachiery N."/>
            <person name="Demaille J."/>
            <person name="Martinez D."/>
        </authorList>
    </citation>
    <scope>NUCLEOTIDE SEQUENCE [LARGE SCALE GENOMIC DNA]</scope>
    <source>
        <strain>Gardel</strain>
    </source>
</reference>
<organism>
    <name type="scientific">Ehrlichia ruminantium (strain Gardel)</name>
    <dbReference type="NCBI Taxonomy" id="302409"/>
    <lineage>
        <taxon>Bacteria</taxon>
        <taxon>Pseudomonadati</taxon>
        <taxon>Pseudomonadota</taxon>
        <taxon>Alphaproteobacteria</taxon>
        <taxon>Rickettsiales</taxon>
        <taxon>Anaplasmataceae</taxon>
        <taxon>Ehrlichia</taxon>
    </lineage>
</organism>
<evidence type="ECO:0000255" key="1">
    <source>
        <dbReference type="HAMAP-Rule" id="MF_00340"/>
    </source>
</evidence>
<evidence type="ECO:0000305" key="2"/>
<feature type="chain" id="PRO_0000225722" description="Large ribosomal subunit protein bL32">
    <location>
        <begin position="1"/>
        <end position="60"/>
    </location>
</feature>
<gene>
    <name evidence="1" type="primary">rpmF</name>
    <name type="ordered locus">ERGA_CDS_05940</name>
</gene>
<protein>
    <recommendedName>
        <fullName evidence="1">Large ribosomal subunit protein bL32</fullName>
    </recommendedName>
    <alternativeName>
        <fullName evidence="2">50S ribosomal protein L32</fullName>
    </alternativeName>
</protein>
<name>RL32_EHRRG</name>
<comment type="similarity">
    <text evidence="1">Belongs to the bacterial ribosomal protein bL32 family.</text>
</comment>
<comment type="sequence caution" evidence="2">
    <conflict type="erroneous initiation">
        <sequence resource="EMBL-CDS" id="CAI28046"/>
    </conflict>
</comment>
<dbReference type="EMBL" id="CR925677">
    <property type="protein sequence ID" value="CAI28046.1"/>
    <property type="status" value="ALT_INIT"/>
    <property type="molecule type" value="Genomic_DNA"/>
</dbReference>
<dbReference type="RefSeq" id="WP_011155254.1">
    <property type="nucleotide sequence ID" value="NC_006831.1"/>
</dbReference>
<dbReference type="SMR" id="Q5FFT3"/>
<dbReference type="GeneID" id="33057738"/>
<dbReference type="KEGG" id="erg:ERGA_CDS_05940"/>
<dbReference type="HOGENOM" id="CLU_129084_2_0_5"/>
<dbReference type="OrthoDB" id="9801927at2"/>
<dbReference type="Proteomes" id="UP000000533">
    <property type="component" value="Chromosome"/>
</dbReference>
<dbReference type="GO" id="GO:0015934">
    <property type="term" value="C:large ribosomal subunit"/>
    <property type="evidence" value="ECO:0007669"/>
    <property type="project" value="InterPro"/>
</dbReference>
<dbReference type="GO" id="GO:0003735">
    <property type="term" value="F:structural constituent of ribosome"/>
    <property type="evidence" value="ECO:0007669"/>
    <property type="project" value="InterPro"/>
</dbReference>
<dbReference type="GO" id="GO:0006412">
    <property type="term" value="P:translation"/>
    <property type="evidence" value="ECO:0007669"/>
    <property type="project" value="UniProtKB-UniRule"/>
</dbReference>
<dbReference type="Gene3D" id="1.20.5.640">
    <property type="entry name" value="Single helix bin"/>
    <property type="match status" value="1"/>
</dbReference>
<dbReference type="HAMAP" id="MF_00340">
    <property type="entry name" value="Ribosomal_bL32"/>
    <property type="match status" value="1"/>
</dbReference>
<dbReference type="InterPro" id="IPR002677">
    <property type="entry name" value="Ribosomal_bL32"/>
</dbReference>
<dbReference type="InterPro" id="IPR044957">
    <property type="entry name" value="Ribosomal_bL32_bact"/>
</dbReference>
<dbReference type="InterPro" id="IPR011332">
    <property type="entry name" value="Ribosomal_zn-bd"/>
</dbReference>
<dbReference type="NCBIfam" id="TIGR01031">
    <property type="entry name" value="rpmF_bact"/>
    <property type="match status" value="1"/>
</dbReference>
<dbReference type="PANTHER" id="PTHR35534">
    <property type="entry name" value="50S RIBOSOMAL PROTEIN L32"/>
    <property type="match status" value="1"/>
</dbReference>
<dbReference type="PANTHER" id="PTHR35534:SF1">
    <property type="entry name" value="LARGE RIBOSOMAL SUBUNIT PROTEIN BL32"/>
    <property type="match status" value="1"/>
</dbReference>
<dbReference type="Pfam" id="PF01783">
    <property type="entry name" value="Ribosomal_L32p"/>
    <property type="match status" value="1"/>
</dbReference>
<dbReference type="SUPFAM" id="SSF57829">
    <property type="entry name" value="Zn-binding ribosomal proteins"/>
    <property type="match status" value="1"/>
</dbReference>